<feature type="chain" id="PRO_1000021327" description="Shikimate dehydrogenase (NADP(+))">
    <location>
        <begin position="1"/>
        <end position="278"/>
    </location>
</feature>
<feature type="active site" description="Proton acceptor" evidence="1">
    <location>
        <position position="65"/>
    </location>
</feature>
<feature type="binding site" evidence="1">
    <location>
        <begin position="14"/>
        <end position="16"/>
    </location>
    <ligand>
        <name>shikimate</name>
        <dbReference type="ChEBI" id="CHEBI:36208"/>
    </ligand>
</feature>
<feature type="binding site" evidence="1">
    <location>
        <position position="61"/>
    </location>
    <ligand>
        <name>shikimate</name>
        <dbReference type="ChEBI" id="CHEBI:36208"/>
    </ligand>
</feature>
<feature type="binding site" evidence="1">
    <location>
        <position position="86"/>
    </location>
    <ligand>
        <name>shikimate</name>
        <dbReference type="ChEBI" id="CHEBI:36208"/>
    </ligand>
</feature>
<feature type="binding site" evidence="1">
    <location>
        <position position="102"/>
    </location>
    <ligand>
        <name>shikimate</name>
        <dbReference type="ChEBI" id="CHEBI:36208"/>
    </ligand>
</feature>
<feature type="binding site" evidence="1">
    <location>
        <begin position="127"/>
        <end position="131"/>
    </location>
    <ligand>
        <name>NADP(+)</name>
        <dbReference type="ChEBI" id="CHEBI:58349"/>
    </ligand>
</feature>
<feature type="binding site" evidence="1">
    <location>
        <begin position="151"/>
        <end position="156"/>
    </location>
    <ligand>
        <name>NADP(+)</name>
        <dbReference type="ChEBI" id="CHEBI:58349"/>
    </ligand>
</feature>
<feature type="binding site" evidence="1">
    <location>
        <position position="221"/>
    </location>
    <ligand>
        <name>NADP(+)</name>
        <dbReference type="ChEBI" id="CHEBI:58349"/>
    </ligand>
</feature>
<feature type="binding site" evidence="1">
    <location>
        <position position="223"/>
    </location>
    <ligand>
        <name>shikimate</name>
        <dbReference type="ChEBI" id="CHEBI:36208"/>
    </ligand>
</feature>
<feature type="binding site" evidence="1">
    <location>
        <position position="245"/>
    </location>
    <ligand>
        <name>NADP(+)</name>
        <dbReference type="ChEBI" id="CHEBI:58349"/>
    </ligand>
</feature>
<proteinExistence type="inferred from homology"/>
<reference key="1">
    <citation type="journal article" date="2008" name="PLoS Genet.">
        <title>Complete genome sequence of the complex carbohydrate-degrading marine bacterium, Saccharophagus degradans strain 2-40 T.</title>
        <authorList>
            <person name="Weiner R.M."/>
            <person name="Taylor L.E. II"/>
            <person name="Henrissat B."/>
            <person name="Hauser L."/>
            <person name="Land M."/>
            <person name="Coutinho P.M."/>
            <person name="Rancurel C."/>
            <person name="Saunders E.H."/>
            <person name="Longmire A.G."/>
            <person name="Zhang H."/>
            <person name="Bayer E.A."/>
            <person name="Gilbert H.J."/>
            <person name="Larimer F."/>
            <person name="Zhulin I.B."/>
            <person name="Ekborg N.A."/>
            <person name="Lamed R."/>
            <person name="Richardson P.M."/>
            <person name="Borovok I."/>
            <person name="Hutcheson S."/>
        </authorList>
    </citation>
    <scope>NUCLEOTIDE SEQUENCE [LARGE SCALE GENOMIC DNA]</scope>
    <source>
        <strain>2-40 / ATCC 43961 / DSM 17024</strain>
    </source>
</reference>
<protein>
    <recommendedName>
        <fullName evidence="1">Shikimate dehydrogenase (NADP(+))</fullName>
        <shortName evidence="1">SDH</shortName>
        <ecNumber evidence="1">1.1.1.25</ecNumber>
    </recommendedName>
</protein>
<sequence>MDTYMVVGNPIAQSKSPLIHTMFAAQTEQQLEYSRQLLEPGEFDAAAKTFFAGQGKGINITMPFKQDAYNFADELSPRALSAGAVNTLIKREDGSILGENTDGVGLINDITDNLNWTLSGRKVLIVGAGGAVGGILLPLMEQNPAEVLIVNRTASKAEELAARFASMGNIRGAGYGELSAAEGGSCSAFDVIINGTSTSLTGDLPPIPPAVITNTSCVYDMVYGAEPTPFMVWAQNHGAAATADGLGMLVGQAAESFYLWRGIRPDIAPVMAALRQSQ</sequence>
<organism>
    <name type="scientific">Saccharophagus degradans (strain 2-40 / ATCC 43961 / DSM 17024)</name>
    <dbReference type="NCBI Taxonomy" id="203122"/>
    <lineage>
        <taxon>Bacteria</taxon>
        <taxon>Pseudomonadati</taxon>
        <taxon>Pseudomonadota</taxon>
        <taxon>Gammaproteobacteria</taxon>
        <taxon>Cellvibrionales</taxon>
        <taxon>Cellvibrionaceae</taxon>
        <taxon>Saccharophagus</taxon>
    </lineage>
</organism>
<comment type="function">
    <text evidence="1">Involved in the biosynthesis of the chorismate, which leads to the biosynthesis of aromatic amino acids. Catalyzes the reversible NADPH linked reduction of 3-dehydroshikimate (DHSA) to yield shikimate (SA).</text>
</comment>
<comment type="catalytic activity">
    <reaction evidence="1">
        <text>shikimate + NADP(+) = 3-dehydroshikimate + NADPH + H(+)</text>
        <dbReference type="Rhea" id="RHEA:17737"/>
        <dbReference type="ChEBI" id="CHEBI:15378"/>
        <dbReference type="ChEBI" id="CHEBI:16630"/>
        <dbReference type="ChEBI" id="CHEBI:36208"/>
        <dbReference type="ChEBI" id="CHEBI:57783"/>
        <dbReference type="ChEBI" id="CHEBI:58349"/>
        <dbReference type="EC" id="1.1.1.25"/>
    </reaction>
</comment>
<comment type="pathway">
    <text evidence="1">Metabolic intermediate biosynthesis; chorismate biosynthesis; chorismate from D-erythrose 4-phosphate and phosphoenolpyruvate: step 4/7.</text>
</comment>
<comment type="subunit">
    <text evidence="1">Homodimer.</text>
</comment>
<comment type="similarity">
    <text evidence="1">Belongs to the shikimate dehydrogenase family.</text>
</comment>
<accession>Q21PT9</accession>
<keyword id="KW-0028">Amino-acid biosynthesis</keyword>
<keyword id="KW-0057">Aromatic amino acid biosynthesis</keyword>
<keyword id="KW-0521">NADP</keyword>
<keyword id="KW-0560">Oxidoreductase</keyword>
<keyword id="KW-1185">Reference proteome</keyword>
<gene>
    <name evidence="1" type="primary">aroE</name>
    <name type="ordered locus">Sde_0026</name>
</gene>
<evidence type="ECO:0000255" key="1">
    <source>
        <dbReference type="HAMAP-Rule" id="MF_00222"/>
    </source>
</evidence>
<name>AROE_SACD2</name>
<dbReference type="EC" id="1.1.1.25" evidence="1"/>
<dbReference type="EMBL" id="CP000282">
    <property type="protein sequence ID" value="ABD79290.1"/>
    <property type="molecule type" value="Genomic_DNA"/>
</dbReference>
<dbReference type="RefSeq" id="WP_011466514.1">
    <property type="nucleotide sequence ID" value="NC_007912.1"/>
</dbReference>
<dbReference type="SMR" id="Q21PT9"/>
<dbReference type="STRING" id="203122.Sde_0026"/>
<dbReference type="GeneID" id="98611746"/>
<dbReference type="KEGG" id="sde:Sde_0026"/>
<dbReference type="eggNOG" id="COG0169">
    <property type="taxonomic scope" value="Bacteria"/>
</dbReference>
<dbReference type="HOGENOM" id="CLU_044063_2_1_6"/>
<dbReference type="OrthoDB" id="9776868at2"/>
<dbReference type="UniPathway" id="UPA00053">
    <property type="reaction ID" value="UER00087"/>
</dbReference>
<dbReference type="Proteomes" id="UP000001947">
    <property type="component" value="Chromosome"/>
</dbReference>
<dbReference type="GO" id="GO:0005829">
    <property type="term" value="C:cytosol"/>
    <property type="evidence" value="ECO:0007669"/>
    <property type="project" value="TreeGrafter"/>
</dbReference>
<dbReference type="GO" id="GO:0050661">
    <property type="term" value="F:NADP binding"/>
    <property type="evidence" value="ECO:0007669"/>
    <property type="project" value="InterPro"/>
</dbReference>
<dbReference type="GO" id="GO:0004764">
    <property type="term" value="F:shikimate 3-dehydrogenase (NADP+) activity"/>
    <property type="evidence" value="ECO:0007669"/>
    <property type="project" value="UniProtKB-UniRule"/>
</dbReference>
<dbReference type="GO" id="GO:0008652">
    <property type="term" value="P:amino acid biosynthetic process"/>
    <property type="evidence" value="ECO:0007669"/>
    <property type="project" value="UniProtKB-KW"/>
</dbReference>
<dbReference type="GO" id="GO:0009073">
    <property type="term" value="P:aromatic amino acid family biosynthetic process"/>
    <property type="evidence" value="ECO:0007669"/>
    <property type="project" value="UniProtKB-KW"/>
</dbReference>
<dbReference type="GO" id="GO:0009423">
    <property type="term" value="P:chorismate biosynthetic process"/>
    <property type="evidence" value="ECO:0007669"/>
    <property type="project" value="UniProtKB-UniRule"/>
</dbReference>
<dbReference type="GO" id="GO:0019632">
    <property type="term" value="P:shikimate metabolic process"/>
    <property type="evidence" value="ECO:0007669"/>
    <property type="project" value="InterPro"/>
</dbReference>
<dbReference type="CDD" id="cd01065">
    <property type="entry name" value="NAD_bind_Shikimate_DH"/>
    <property type="match status" value="1"/>
</dbReference>
<dbReference type="FunFam" id="3.40.50.10860:FF:000006">
    <property type="entry name" value="Shikimate dehydrogenase (NADP(+))"/>
    <property type="match status" value="1"/>
</dbReference>
<dbReference type="Gene3D" id="3.40.50.10860">
    <property type="entry name" value="Leucine Dehydrogenase, chain A, domain 1"/>
    <property type="match status" value="1"/>
</dbReference>
<dbReference type="Gene3D" id="3.40.50.720">
    <property type="entry name" value="NAD(P)-binding Rossmann-like Domain"/>
    <property type="match status" value="1"/>
</dbReference>
<dbReference type="HAMAP" id="MF_00222">
    <property type="entry name" value="Shikimate_DH_AroE"/>
    <property type="match status" value="1"/>
</dbReference>
<dbReference type="InterPro" id="IPR046346">
    <property type="entry name" value="Aminoacid_DH-like_N_sf"/>
</dbReference>
<dbReference type="InterPro" id="IPR036291">
    <property type="entry name" value="NAD(P)-bd_dom_sf"/>
</dbReference>
<dbReference type="InterPro" id="IPR041121">
    <property type="entry name" value="SDH_C"/>
</dbReference>
<dbReference type="InterPro" id="IPR011342">
    <property type="entry name" value="Shikimate_DH"/>
</dbReference>
<dbReference type="InterPro" id="IPR013708">
    <property type="entry name" value="Shikimate_DH-bd_N"/>
</dbReference>
<dbReference type="InterPro" id="IPR022893">
    <property type="entry name" value="Shikimate_DH_fam"/>
</dbReference>
<dbReference type="InterPro" id="IPR006151">
    <property type="entry name" value="Shikm_DH/Glu-tRNA_Rdtase"/>
</dbReference>
<dbReference type="NCBIfam" id="TIGR00507">
    <property type="entry name" value="aroE"/>
    <property type="match status" value="1"/>
</dbReference>
<dbReference type="NCBIfam" id="NF001310">
    <property type="entry name" value="PRK00258.1-2"/>
    <property type="match status" value="1"/>
</dbReference>
<dbReference type="PANTHER" id="PTHR21089:SF1">
    <property type="entry name" value="BIFUNCTIONAL 3-DEHYDROQUINATE DEHYDRATASE_SHIKIMATE DEHYDROGENASE, CHLOROPLASTIC"/>
    <property type="match status" value="1"/>
</dbReference>
<dbReference type="PANTHER" id="PTHR21089">
    <property type="entry name" value="SHIKIMATE DEHYDROGENASE"/>
    <property type="match status" value="1"/>
</dbReference>
<dbReference type="Pfam" id="PF18317">
    <property type="entry name" value="SDH_C"/>
    <property type="match status" value="1"/>
</dbReference>
<dbReference type="Pfam" id="PF01488">
    <property type="entry name" value="Shikimate_DH"/>
    <property type="match status" value="1"/>
</dbReference>
<dbReference type="Pfam" id="PF08501">
    <property type="entry name" value="Shikimate_dh_N"/>
    <property type="match status" value="1"/>
</dbReference>
<dbReference type="SUPFAM" id="SSF53223">
    <property type="entry name" value="Aminoacid dehydrogenase-like, N-terminal domain"/>
    <property type="match status" value="1"/>
</dbReference>
<dbReference type="SUPFAM" id="SSF51735">
    <property type="entry name" value="NAD(P)-binding Rossmann-fold domains"/>
    <property type="match status" value="1"/>
</dbReference>